<organism>
    <name type="scientific">Nicotiana tomentosiformis</name>
    <name type="common">Tobacco</name>
    <dbReference type="NCBI Taxonomy" id="4098"/>
    <lineage>
        <taxon>Eukaryota</taxon>
        <taxon>Viridiplantae</taxon>
        <taxon>Streptophyta</taxon>
        <taxon>Embryophyta</taxon>
        <taxon>Tracheophyta</taxon>
        <taxon>Spermatophyta</taxon>
        <taxon>Magnoliopsida</taxon>
        <taxon>eudicotyledons</taxon>
        <taxon>Gunneridae</taxon>
        <taxon>Pentapetalae</taxon>
        <taxon>asterids</taxon>
        <taxon>lamiids</taxon>
        <taxon>Solanales</taxon>
        <taxon>Solanaceae</taxon>
        <taxon>Nicotianoideae</taxon>
        <taxon>Nicotianeae</taxon>
        <taxon>Nicotiana</taxon>
    </lineage>
</organism>
<name>NDHH_NICTO</name>
<geneLocation type="chloroplast"/>
<accession>Q33BW6</accession>
<protein>
    <recommendedName>
        <fullName evidence="1">NAD(P)H-quinone oxidoreductase subunit H, chloroplastic</fullName>
        <ecNumber evidence="1">7.1.1.-</ecNumber>
    </recommendedName>
    <alternativeName>
        <fullName>NAD(P)H dehydrogenase subunit H</fullName>
    </alternativeName>
    <alternativeName>
        <fullName evidence="1">NADH-plastoquinone oxidoreductase 49 kDa subunit</fullName>
    </alternativeName>
    <alternativeName>
        <fullName evidence="1">NADH-plastoquinone oxidoreductase subunit H</fullName>
    </alternativeName>
</protein>
<feature type="chain" id="PRO_0000358009" description="NAD(P)H-quinone oxidoreductase subunit H, chloroplastic">
    <location>
        <begin position="1"/>
        <end position="393"/>
    </location>
</feature>
<reference key="1">
    <citation type="journal article" date="2006" name="Mol. Genet. Genomics">
        <title>The chloroplast genome of Nicotiana sylvestris and Nicotiana tomentosiformis: complete sequencing confirms that the Nicotiana sylvestris progenitor is the maternal genome donor of Nicotiana tabacum.</title>
        <authorList>
            <person name="Yukawa M."/>
            <person name="Tsudzuki T."/>
            <person name="Sugiura M."/>
        </authorList>
    </citation>
    <scope>NUCLEOTIDE SEQUENCE [LARGE SCALE GENOMIC DNA]</scope>
</reference>
<gene>
    <name evidence="1" type="primary">ndhH</name>
</gene>
<sequence>MTAPTTRKDLMIVNMGPQHPSMHGVLRLIVTLDGEDVVDCEPILGYLHRGMEKIAENRTIIQYLPYVTRWDYLATMFTEAITINGPEQLGNIQVPKRASYIRVIMLELSRIASHLLWLGPFMADIGAQTPFFYIFRERELIYDLFEAATGMRMMHNFFRIGGVAADLPYGWINKCLDFCDYFLTGVAEYQKLITRNPLFLERVEGVGIIGGDEALNWGLSGPMLRASGIEWDLRKVDHYESYDEFDWQVQWQREGDSLARYLVRISEMTESIKIIQQALEGIPGGPYENLEIRRFDRLKDPEWNAFEYRFISKKPSPTFELSKQELYVRVEAPKGELGIFLIGDQSVFPWRWKIRPPGFINLQILPQLVKRMKLADIMTILGSIDIIMGEVDR</sequence>
<comment type="function">
    <text evidence="1">NDH shuttles electrons from NAD(P)H:plastoquinone, via FMN and iron-sulfur (Fe-S) centers, to quinones in the photosynthetic chain and possibly in a chloroplast respiratory chain. The immediate electron acceptor for the enzyme in this species is believed to be plastoquinone. Couples the redox reaction to proton translocation, and thus conserves the redox energy in a proton gradient.</text>
</comment>
<comment type="catalytic activity">
    <reaction evidence="1">
        <text>a plastoquinone + NADH + (n+1) H(+)(in) = a plastoquinol + NAD(+) + n H(+)(out)</text>
        <dbReference type="Rhea" id="RHEA:42608"/>
        <dbReference type="Rhea" id="RHEA-COMP:9561"/>
        <dbReference type="Rhea" id="RHEA-COMP:9562"/>
        <dbReference type="ChEBI" id="CHEBI:15378"/>
        <dbReference type="ChEBI" id="CHEBI:17757"/>
        <dbReference type="ChEBI" id="CHEBI:57540"/>
        <dbReference type="ChEBI" id="CHEBI:57945"/>
        <dbReference type="ChEBI" id="CHEBI:62192"/>
    </reaction>
</comment>
<comment type="catalytic activity">
    <reaction evidence="1">
        <text>a plastoquinone + NADPH + (n+1) H(+)(in) = a plastoquinol + NADP(+) + n H(+)(out)</text>
        <dbReference type="Rhea" id="RHEA:42612"/>
        <dbReference type="Rhea" id="RHEA-COMP:9561"/>
        <dbReference type="Rhea" id="RHEA-COMP:9562"/>
        <dbReference type="ChEBI" id="CHEBI:15378"/>
        <dbReference type="ChEBI" id="CHEBI:17757"/>
        <dbReference type="ChEBI" id="CHEBI:57783"/>
        <dbReference type="ChEBI" id="CHEBI:58349"/>
        <dbReference type="ChEBI" id="CHEBI:62192"/>
    </reaction>
</comment>
<comment type="subunit">
    <text evidence="1">NDH is composed of at least 16 different subunits, 5 of which are encoded in the nucleus.</text>
</comment>
<comment type="subcellular location">
    <subcellularLocation>
        <location evidence="1">Plastid</location>
        <location evidence="1">Chloroplast thylakoid membrane</location>
        <topology evidence="1">Peripheral membrane protein</topology>
        <orientation evidence="1">Stromal side</orientation>
    </subcellularLocation>
</comment>
<comment type="similarity">
    <text evidence="1">Belongs to the complex I 49 kDa subunit family.</text>
</comment>
<proteinExistence type="inferred from homology"/>
<evidence type="ECO:0000255" key="1">
    <source>
        <dbReference type="HAMAP-Rule" id="MF_01358"/>
    </source>
</evidence>
<dbReference type="EC" id="7.1.1.-" evidence="1"/>
<dbReference type="EMBL" id="AB240139">
    <property type="protein sequence ID" value="BAE48069.1"/>
    <property type="molecule type" value="Genomic_DNA"/>
</dbReference>
<dbReference type="RefSeq" id="YP_398929.1">
    <property type="nucleotide sequence ID" value="NC_007602.1"/>
</dbReference>
<dbReference type="SMR" id="Q33BW6"/>
<dbReference type="GeneID" id="3776354"/>
<dbReference type="KEGG" id="nto:3776354"/>
<dbReference type="OrthoDB" id="1244686at2759"/>
<dbReference type="GO" id="GO:0009535">
    <property type="term" value="C:chloroplast thylakoid membrane"/>
    <property type="evidence" value="ECO:0007669"/>
    <property type="project" value="UniProtKB-SubCell"/>
</dbReference>
<dbReference type="GO" id="GO:0051287">
    <property type="term" value="F:NAD binding"/>
    <property type="evidence" value="ECO:0007669"/>
    <property type="project" value="InterPro"/>
</dbReference>
<dbReference type="GO" id="GO:0016655">
    <property type="term" value="F:oxidoreductase activity, acting on NAD(P)H, quinone or similar compound as acceptor"/>
    <property type="evidence" value="ECO:0007669"/>
    <property type="project" value="UniProtKB-UniRule"/>
</dbReference>
<dbReference type="GO" id="GO:0048038">
    <property type="term" value="F:quinone binding"/>
    <property type="evidence" value="ECO:0007669"/>
    <property type="project" value="UniProtKB-KW"/>
</dbReference>
<dbReference type="GO" id="GO:0019684">
    <property type="term" value="P:photosynthesis, light reaction"/>
    <property type="evidence" value="ECO:0007669"/>
    <property type="project" value="UniProtKB-UniRule"/>
</dbReference>
<dbReference type="FunFam" id="1.10.645.10:FF:000003">
    <property type="entry name" value="NAD(P)H-quinone oxidoreductase subunit H, chloroplastic"/>
    <property type="match status" value="1"/>
</dbReference>
<dbReference type="Gene3D" id="1.10.645.10">
    <property type="entry name" value="Cytochrome-c3 Hydrogenase, chain B"/>
    <property type="match status" value="1"/>
</dbReference>
<dbReference type="HAMAP" id="MF_01358">
    <property type="entry name" value="NDH1_NuoD"/>
    <property type="match status" value="1"/>
</dbReference>
<dbReference type="InterPro" id="IPR001135">
    <property type="entry name" value="NADH_Q_OxRdtase_suD"/>
</dbReference>
<dbReference type="InterPro" id="IPR014029">
    <property type="entry name" value="NADH_UbQ_OxRdtase_49kDa_CS"/>
</dbReference>
<dbReference type="InterPro" id="IPR022885">
    <property type="entry name" value="NDH1_su_D/H"/>
</dbReference>
<dbReference type="InterPro" id="IPR029014">
    <property type="entry name" value="NiFe-Hase_large"/>
</dbReference>
<dbReference type="NCBIfam" id="NF004739">
    <property type="entry name" value="PRK06075.1"/>
    <property type="match status" value="1"/>
</dbReference>
<dbReference type="NCBIfam" id="NF005649">
    <property type="entry name" value="PRK07415.1"/>
    <property type="match status" value="1"/>
</dbReference>
<dbReference type="PANTHER" id="PTHR11993:SF10">
    <property type="entry name" value="NADH DEHYDROGENASE [UBIQUINONE] IRON-SULFUR PROTEIN 2, MITOCHONDRIAL"/>
    <property type="match status" value="1"/>
</dbReference>
<dbReference type="PANTHER" id="PTHR11993">
    <property type="entry name" value="NADH-UBIQUINONE OXIDOREDUCTASE 49 KDA SUBUNIT"/>
    <property type="match status" value="1"/>
</dbReference>
<dbReference type="Pfam" id="PF00346">
    <property type="entry name" value="Complex1_49kDa"/>
    <property type="match status" value="1"/>
</dbReference>
<dbReference type="SUPFAM" id="SSF56762">
    <property type="entry name" value="HydB/Nqo4-like"/>
    <property type="match status" value="1"/>
</dbReference>
<dbReference type="PROSITE" id="PS00535">
    <property type="entry name" value="COMPLEX1_49K"/>
    <property type="match status" value="1"/>
</dbReference>
<keyword id="KW-0150">Chloroplast</keyword>
<keyword id="KW-0472">Membrane</keyword>
<keyword id="KW-0520">NAD</keyword>
<keyword id="KW-0521">NADP</keyword>
<keyword id="KW-0934">Plastid</keyword>
<keyword id="KW-0618">Plastoquinone</keyword>
<keyword id="KW-0874">Quinone</keyword>
<keyword id="KW-0793">Thylakoid</keyword>
<keyword id="KW-1278">Translocase</keyword>
<keyword id="KW-0813">Transport</keyword>